<dbReference type="EC" id="5.2.1.8" evidence="1"/>
<dbReference type="EMBL" id="AE017321">
    <property type="protein sequence ID" value="AAW71142.1"/>
    <property type="molecule type" value="Genomic_DNA"/>
</dbReference>
<dbReference type="RefSeq" id="WP_011256752.1">
    <property type="nucleotide sequence ID" value="NC_006833.1"/>
</dbReference>
<dbReference type="SMR" id="Q5GS82"/>
<dbReference type="STRING" id="292805.Wbm0554"/>
<dbReference type="KEGG" id="wbm:Wbm0554"/>
<dbReference type="eggNOG" id="COG0544">
    <property type="taxonomic scope" value="Bacteria"/>
</dbReference>
<dbReference type="HOGENOM" id="CLU_033058_2_2_5"/>
<dbReference type="Proteomes" id="UP000000534">
    <property type="component" value="Chromosome"/>
</dbReference>
<dbReference type="GO" id="GO:0005737">
    <property type="term" value="C:cytoplasm"/>
    <property type="evidence" value="ECO:0007669"/>
    <property type="project" value="UniProtKB-SubCell"/>
</dbReference>
<dbReference type="GO" id="GO:0003755">
    <property type="term" value="F:peptidyl-prolyl cis-trans isomerase activity"/>
    <property type="evidence" value="ECO:0007669"/>
    <property type="project" value="UniProtKB-UniRule"/>
</dbReference>
<dbReference type="GO" id="GO:0051301">
    <property type="term" value="P:cell division"/>
    <property type="evidence" value="ECO:0007669"/>
    <property type="project" value="UniProtKB-KW"/>
</dbReference>
<dbReference type="GO" id="GO:0006457">
    <property type="term" value="P:protein folding"/>
    <property type="evidence" value="ECO:0007669"/>
    <property type="project" value="UniProtKB-UniRule"/>
</dbReference>
<dbReference type="GO" id="GO:0015031">
    <property type="term" value="P:protein transport"/>
    <property type="evidence" value="ECO:0007669"/>
    <property type="project" value="UniProtKB-UniRule"/>
</dbReference>
<dbReference type="FunFam" id="3.10.50.40:FF:000001">
    <property type="entry name" value="Trigger factor"/>
    <property type="match status" value="1"/>
</dbReference>
<dbReference type="Gene3D" id="3.10.50.40">
    <property type="match status" value="1"/>
</dbReference>
<dbReference type="Gene3D" id="3.30.70.1050">
    <property type="entry name" value="Trigger factor ribosome-binding domain"/>
    <property type="match status" value="1"/>
</dbReference>
<dbReference type="Gene3D" id="1.10.3120.10">
    <property type="entry name" value="Trigger factor, C-terminal domain"/>
    <property type="match status" value="1"/>
</dbReference>
<dbReference type="HAMAP" id="MF_00303">
    <property type="entry name" value="Trigger_factor_Tig"/>
    <property type="match status" value="1"/>
</dbReference>
<dbReference type="InterPro" id="IPR046357">
    <property type="entry name" value="PPIase_dom_sf"/>
</dbReference>
<dbReference type="InterPro" id="IPR001179">
    <property type="entry name" value="PPIase_FKBP_dom"/>
</dbReference>
<dbReference type="InterPro" id="IPR005215">
    <property type="entry name" value="Trig_fac"/>
</dbReference>
<dbReference type="InterPro" id="IPR008880">
    <property type="entry name" value="Trigger_fac_C"/>
</dbReference>
<dbReference type="InterPro" id="IPR037041">
    <property type="entry name" value="Trigger_fac_C_sf"/>
</dbReference>
<dbReference type="InterPro" id="IPR008881">
    <property type="entry name" value="Trigger_fac_ribosome-bd_bac"/>
</dbReference>
<dbReference type="InterPro" id="IPR036611">
    <property type="entry name" value="Trigger_fac_ribosome-bd_sf"/>
</dbReference>
<dbReference type="InterPro" id="IPR027304">
    <property type="entry name" value="Trigger_fact/SurA_dom_sf"/>
</dbReference>
<dbReference type="NCBIfam" id="TIGR00115">
    <property type="entry name" value="tig"/>
    <property type="match status" value="1"/>
</dbReference>
<dbReference type="Pfam" id="PF00254">
    <property type="entry name" value="FKBP_C"/>
    <property type="match status" value="1"/>
</dbReference>
<dbReference type="Pfam" id="PF05698">
    <property type="entry name" value="Trigger_C"/>
    <property type="match status" value="1"/>
</dbReference>
<dbReference type="Pfam" id="PF05697">
    <property type="entry name" value="Trigger_N"/>
    <property type="match status" value="1"/>
</dbReference>
<dbReference type="PIRSF" id="PIRSF003095">
    <property type="entry name" value="Trigger_factor"/>
    <property type="match status" value="1"/>
</dbReference>
<dbReference type="SUPFAM" id="SSF54534">
    <property type="entry name" value="FKBP-like"/>
    <property type="match status" value="1"/>
</dbReference>
<dbReference type="SUPFAM" id="SSF109998">
    <property type="entry name" value="Triger factor/SurA peptide-binding domain-like"/>
    <property type="match status" value="1"/>
</dbReference>
<dbReference type="SUPFAM" id="SSF102735">
    <property type="entry name" value="Trigger factor ribosome-binding domain"/>
    <property type="match status" value="1"/>
</dbReference>
<dbReference type="PROSITE" id="PS50059">
    <property type="entry name" value="FKBP_PPIASE"/>
    <property type="match status" value="1"/>
</dbReference>
<gene>
    <name evidence="1" type="primary">tig</name>
    <name type="ordered locus">Wbm0554</name>
</gene>
<protein>
    <recommendedName>
        <fullName evidence="1">Trigger factor</fullName>
        <shortName evidence="1">TF</shortName>
        <ecNumber evidence="1">5.2.1.8</ecNumber>
    </recommendedName>
    <alternativeName>
        <fullName evidence="1">PPIase</fullName>
    </alternativeName>
</protein>
<proteinExistence type="inferred from homology"/>
<name>TIG_WOLTR</name>
<accession>Q5GS82</accession>
<evidence type="ECO:0000255" key="1">
    <source>
        <dbReference type="HAMAP-Rule" id="MF_00303"/>
    </source>
</evidence>
<keyword id="KW-0131">Cell cycle</keyword>
<keyword id="KW-0132">Cell division</keyword>
<keyword id="KW-0143">Chaperone</keyword>
<keyword id="KW-0963">Cytoplasm</keyword>
<keyword id="KW-0413">Isomerase</keyword>
<keyword id="KW-1185">Reference proteome</keyword>
<keyword id="KW-0697">Rotamase</keyword>
<organism>
    <name type="scientific">Wolbachia sp. subsp. Brugia malayi (strain TRS)</name>
    <dbReference type="NCBI Taxonomy" id="292805"/>
    <lineage>
        <taxon>Bacteria</taxon>
        <taxon>Pseudomonadati</taxon>
        <taxon>Pseudomonadota</taxon>
        <taxon>Alphaproteobacteria</taxon>
        <taxon>Rickettsiales</taxon>
        <taxon>Anaplasmataceae</taxon>
        <taxon>Wolbachieae</taxon>
        <taxon>Wolbachia</taxon>
    </lineage>
</organism>
<comment type="function">
    <text evidence="1">Involved in protein export. Acts as a chaperone by maintaining the newly synthesized protein in an open conformation. Functions as a peptidyl-prolyl cis-trans isomerase.</text>
</comment>
<comment type="catalytic activity">
    <reaction evidence="1">
        <text>[protein]-peptidylproline (omega=180) = [protein]-peptidylproline (omega=0)</text>
        <dbReference type="Rhea" id="RHEA:16237"/>
        <dbReference type="Rhea" id="RHEA-COMP:10747"/>
        <dbReference type="Rhea" id="RHEA-COMP:10748"/>
        <dbReference type="ChEBI" id="CHEBI:83833"/>
        <dbReference type="ChEBI" id="CHEBI:83834"/>
        <dbReference type="EC" id="5.2.1.8"/>
    </reaction>
</comment>
<comment type="subcellular location">
    <subcellularLocation>
        <location>Cytoplasm</location>
    </subcellularLocation>
    <text evidence="1">About half TF is bound to the ribosome near the polypeptide exit tunnel while the other half is free in the cytoplasm.</text>
</comment>
<comment type="domain">
    <text evidence="1">Consists of 3 domains; the N-terminus binds the ribosome, the middle domain has PPIase activity, while the C-terminus has intrinsic chaperone activity on its own.</text>
</comment>
<comment type="similarity">
    <text evidence="1">Belongs to the FKBP-type PPIase family. Tig subfamily.</text>
</comment>
<feature type="chain" id="PRO_0000179464" description="Trigger factor">
    <location>
        <begin position="1"/>
        <end position="447"/>
    </location>
</feature>
<feature type="domain" description="PPIase FKBP-type" evidence="1">
    <location>
        <begin position="188"/>
        <end position="273"/>
    </location>
</feature>
<sequence>MSSNIPQNAVEVDTLSSIYTYKELSIDKLKHEYEITVGSNYIEQKVNSRLQEIAKNAKLPGFRSGKMPYDLVVTNYKNEALEYVVNSTIDYCSSDLMKKIEVKSHIYPKVDIMSLPNLNEEGEKSNFVYKLSFESMPEVPVIDLDKINLKKVEARIEEEDIKGFVDSIKTRFPSFVSVDDASYQAKNGDKLVIDFEGRIRNKLFQGGSNKNFKVTLGSGTFINGFENQLTGMKKGETKSFKLKFPEDYQTISLAGQEANFSVRVNDIQVAEDFGGDDEMAKKIGFRDCSSLKNHAKEVIGGQCEEMRDLLIKKELFDYLDANYSFDLPTDVVRQEQQRVERELGSKDDSCKEAERRVKLAMLFMKFSTEHKISLTQNDILNVIVNQYISKDVPFDRVFKHFKSDRQFQELVRGQALEHKVTSYIIEKVNKEEQIVSVKELKELFGNI</sequence>
<reference key="1">
    <citation type="journal article" date="2005" name="PLoS Biol.">
        <title>The Wolbachia genome of Brugia malayi: endosymbiont evolution within a human pathogenic nematode.</title>
        <authorList>
            <person name="Foster J."/>
            <person name="Ganatra M."/>
            <person name="Kamal I."/>
            <person name="Ware J."/>
            <person name="Makarova K."/>
            <person name="Ivanova N."/>
            <person name="Bhattacharyya A."/>
            <person name="Kapatral V."/>
            <person name="Kumar S."/>
            <person name="Posfai J."/>
            <person name="Vincze T."/>
            <person name="Ingram J."/>
            <person name="Moran L."/>
            <person name="Lapidus A."/>
            <person name="Omelchenko M."/>
            <person name="Kyrpides N."/>
            <person name="Ghedin E."/>
            <person name="Wang S."/>
            <person name="Goltsman E."/>
            <person name="Joukov V."/>
            <person name="Ostrovskaya O."/>
            <person name="Tsukerman K."/>
            <person name="Mazur M."/>
            <person name="Comb D."/>
            <person name="Koonin E."/>
            <person name="Slatko B."/>
        </authorList>
    </citation>
    <scope>NUCLEOTIDE SEQUENCE [LARGE SCALE GENOMIC DNA]</scope>
    <source>
        <strain>TRS</strain>
    </source>
</reference>